<reference evidence="10 11" key="1">
    <citation type="journal article" date="2003" name="Int. J. Dev. Biol.">
        <title>Isolation and growth factor inducibility of the Xenopus laevis Lmx1b gene.</title>
        <authorList>
            <person name="Haldin C.E."/>
            <person name="Nijjar S."/>
            <person name="Masse K."/>
            <person name="Barnett M.W."/>
            <person name="Jones E.A."/>
        </authorList>
    </citation>
    <scope>NUCLEOTIDE SEQUENCE [MRNA]</scope>
    <scope>TISSUE SPECIFICITY</scope>
    <scope>DEVELOPMENTAL STAGE</scope>
    <scope>INDUCTION</scope>
    <source>
        <tissue evidence="4">Neurula</tissue>
    </source>
</reference>
<reference evidence="10" key="2">
    <citation type="journal article" date="2008" name="Dev. Biol.">
        <title>The lmx1b gene is pivotal in glomus development in Xenopus laevis.</title>
        <authorList>
            <person name="Haldin C.E."/>
            <person name="Masse K.L."/>
            <person name="Bhamra S."/>
            <person name="Simrick S."/>
            <person name="Kyuno J."/>
            <person name="Jones E.A."/>
        </authorList>
    </citation>
    <scope>FUNCTION</scope>
    <scope>TISSUE SPECIFICITY</scope>
</reference>
<reference evidence="10" key="3">
    <citation type="journal article" date="2010" name="Neuron">
        <title>Activity-dependent expression of Lmx1b regulates specification of serotonergic neurons modulating swimming behavior.</title>
        <authorList>
            <person name="Demarque M."/>
            <person name="Spitzer N.C."/>
        </authorList>
    </citation>
    <scope>FUNCTION</scope>
    <scope>INDUCTION</scope>
</reference>
<sequence>MDIATGPESLDRCFTRGPSDCAKMLDTIKMEDHPLRTGTATLGVLLGSECQHQAVCEGCQRPISDRFLMRVNEASWHEECLQCTVCQQPLTTSCYFRDRKLFCKQDYQQLFAAKCSGCMEKIAPTEFVMRALECVYHLSCFCCCVCERQLRKGDEFVLKEGQLLCKSDYEKEKDLLSSGSPDDSDSVKSDDEEGDVKPGKGRVNQGKGSDDGKDPRRPKRPRTILTTQQRRAFKASFEVSSKPCRKVRETLAAETGLSVRVVQVWFQNQRAKIKKLARRHQQQQEQQNSQRLGQEVMSSRMEGMMTSYAPLAPSQQQIVTMDQNSYSTDPFQQGLTPPQMPGDHMNPYGNDTIFHDIDSDTSLTSLSDCFLASSEVTSMQARVGNPIDRLYSMQSSYFAS</sequence>
<name>LMX1B_XENLA</name>
<dbReference type="EMBL" id="AF414086">
    <property type="protein sequence ID" value="AAL32444.1"/>
    <property type="molecule type" value="mRNA"/>
</dbReference>
<dbReference type="RefSeq" id="NP_001083902.1">
    <property type="nucleotide sequence ID" value="NM_001090433.2"/>
</dbReference>
<dbReference type="SMR" id="Q8UVR3"/>
<dbReference type="GeneID" id="399182"/>
<dbReference type="KEGG" id="xla:399182"/>
<dbReference type="AGR" id="Xenbase:XB-GENE-494754"/>
<dbReference type="CTD" id="399182"/>
<dbReference type="Xenbase" id="XB-GENE-494754">
    <property type="gene designation" value="lmx1b.S"/>
</dbReference>
<dbReference type="OMA" id="CYLRERK"/>
<dbReference type="OrthoDB" id="6159439at2759"/>
<dbReference type="Proteomes" id="UP000186698">
    <property type="component" value="Chromosome 8S"/>
</dbReference>
<dbReference type="Bgee" id="399182">
    <property type="expression patterns" value="Expressed in internal ear and 11 other cell types or tissues"/>
</dbReference>
<dbReference type="GO" id="GO:0005634">
    <property type="term" value="C:nucleus"/>
    <property type="evidence" value="ECO:0000250"/>
    <property type="project" value="UniProtKB"/>
</dbReference>
<dbReference type="GO" id="GO:0003700">
    <property type="term" value="F:DNA-binding transcription factor activity"/>
    <property type="evidence" value="ECO:0000250"/>
    <property type="project" value="UniProtKB"/>
</dbReference>
<dbReference type="GO" id="GO:0000981">
    <property type="term" value="F:DNA-binding transcription factor activity, RNA polymerase II-specific"/>
    <property type="evidence" value="ECO:0000318"/>
    <property type="project" value="GO_Central"/>
</dbReference>
<dbReference type="GO" id="GO:0046872">
    <property type="term" value="F:metal ion binding"/>
    <property type="evidence" value="ECO:0007669"/>
    <property type="project" value="UniProtKB-KW"/>
</dbReference>
<dbReference type="GO" id="GO:0000977">
    <property type="term" value="F:RNA polymerase II transcription regulatory region sequence-specific DNA binding"/>
    <property type="evidence" value="ECO:0000318"/>
    <property type="project" value="GO_Central"/>
</dbReference>
<dbReference type="GO" id="GO:0072013">
    <property type="term" value="P:glomus development"/>
    <property type="evidence" value="ECO:0000315"/>
    <property type="project" value="UniProtKB"/>
</dbReference>
<dbReference type="GO" id="GO:0030182">
    <property type="term" value="P:neuron differentiation"/>
    <property type="evidence" value="ECO:0000315"/>
    <property type="project" value="UniProtKB"/>
</dbReference>
<dbReference type="GO" id="GO:0039020">
    <property type="term" value="P:pronephric nephron tubule development"/>
    <property type="evidence" value="ECO:0000315"/>
    <property type="project" value="UniProtKB"/>
</dbReference>
<dbReference type="GO" id="GO:0006357">
    <property type="term" value="P:regulation of transcription by RNA polymerase II"/>
    <property type="evidence" value="ECO:0000318"/>
    <property type="project" value="GO_Central"/>
</dbReference>
<dbReference type="CDD" id="cd00086">
    <property type="entry name" value="homeodomain"/>
    <property type="match status" value="1"/>
</dbReference>
<dbReference type="CDD" id="cd09371">
    <property type="entry name" value="LIM1_Lmx1b"/>
    <property type="match status" value="1"/>
</dbReference>
<dbReference type="CDD" id="cd09378">
    <property type="entry name" value="LIM2_Lmx1a_Lmx1b"/>
    <property type="match status" value="1"/>
</dbReference>
<dbReference type="FunFam" id="2.10.110.10:FF:000193">
    <property type="entry name" value="LIM homeobox 4"/>
    <property type="match status" value="1"/>
</dbReference>
<dbReference type="FunFam" id="1.10.10.60:FF:000095">
    <property type="entry name" value="LIM homeobox transcription factor 1 beta"/>
    <property type="match status" value="1"/>
</dbReference>
<dbReference type="FunFam" id="2.10.110.10:FF:000006">
    <property type="entry name" value="LIM homeobox transcription factor 1-beta"/>
    <property type="match status" value="1"/>
</dbReference>
<dbReference type="Gene3D" id="2.10.110.10">
    <property type="entry name" value="Cysteine Rich Protein"/>
    <property type="match status" value="2"/>
</dbReference>
<dbReference type="Gene3D" id="1.10.10.60">
    <property type="entry name" value="Homeodomain-like"/>
    <property type="match status" value="1"/>
</dbReference>
<dbReference type="InterPro" id="IPR001356">
    <property type="entry name" value="HD"/>
</dbReference>
<dbReference type="InterPro" id="IPR017970">
    <property type="entry name" value="Homeobox_CS"/>
</dbReference>
<dbReference type="InterPro" id="IPR009057">
    <property type="entry name" value="Homeodomain-like_sf"/>
</dbReference>
<dbReference type="InterPro" id="IPR050453">
    <property type="entry name" value="LIM_Homeobox_TF"/>
</dbReference>
<dbReference type="InterPro" id="IPR001781">
    <property type="entry name" value="Znf_LIM"/>
</dbReference>
<dbReference type="PANTHER" id="PTHR24208:SF96">
    <property type="entry name" value="LIM HOMEOBOX TRANSCRIPTION FACTOR 1-BETA"/>
    <property type="match status" value="1"/>
</dbReference>
<dbReference type="PANTHER" id="PTHR24208">
    <property type="entry name" value="LIM/HOMEOBOX PROTEIN LHX"/>
    <property type="match status" value="1"/>
</dbReference>
<dbReference type="Pfam" id="PF00046">
    <property type="entry name" value="Homeodomain"/>
    <property type="match status" value="1"/>
</dbReference>
<dbReference type="Pfam" id="PF00412">
    <property type="entry name" value="LIM"/>
    <property type="match status" value="2"/>
</dbReference>
<dbReference type="SMART" id="SM00389">
    <property type="entry name" value="HOX"/>
    <property type="match status" value="1"/>
</dbReference>
<dbReference type="SMART" id="SM00132">
    <property type="entry name" value="LIM"/>
    <property type="match status" value="2"/>
</dbReference>
<dbReference type="SUPFAM" id="SSF57716">
    <property type="entry name" value="Glucocorticoid receptor-like (DNA-binding domain)"/>
    <property type="match status" value="2"/>
</dbReference>
<dbReference type="SUPFAM" id="SSF46689">
    <property type="entry name" value="Homeodomain-like"/>
    <property type="match status" value="1"/>
</dbReference>
<dbReference type="PROSITE" id="PS00027">
    <property type="entry name" value="HOMEOBOX_1"/>
    <property type="match status" value="1"/>
</dbReference>
<dbReference type="PROSITE" id="PS50071">
    <property type="entry name" value="HOMEOBOX_2"/>
    <property type="match status" value="1"/>
</dbReference>
<dbReference type="PROSITE" id="PS00478">
    <property type="entry name" value="LIM_DOMAIN_1"/>
    <property type="match status" value="2"/>
</dbReference>
<dbReference type="PROSITE" id="PS50023">
    <property type="entry name" value="LIM_DOMAIN_2"/>
    <property type="match status" value="2"/>
</dbReference>
<comment type="function">
    <text evidence="5 6">Required for early specification of the kidney glomus, lying upstream of wt1 in the pathway controlling glomus differentiation. The balance in levels and expression patterns of binding partners such as lhx1/lim-1 influences differentiation into glomus or tubule derivatives. Involved in specification of serotonergic neurons.</text>
</comment>
<comment type="subcellular location">
    <subcellularLocation>
        <location evidence="1">Nucleus</location>
    </subcellularLocation>
</comment>
<comment type="tissue specificity">
    <text evidence="4 5">Shows a temporal expression pattern in three main areas: neural, kidney and limbs. From stage 13 onwards, expressed in regions of the nervous system including the placodes and otic vesicles, eye, specific sets of neurons, and in discreet regions of the neural tube. From stage 13, also expressed in the presumptive pronephros, and from stage 27 expression is predominant in the capsule of the pronephric glomus. Also expressed in the developing forelimbs and hindlimbs. In metamorphosing tadpoles, expressed in the eye, brain, muscle and mesonephric kidney.</text>
</comment>
<comment type="developmental stage">
    <text evidence="4">Expressed zygotically from stage 10.5. Expression is elevated between stages 12.5 and 14, and continues throughout neurulae, tailbud and swimming tadpole stages.</text>
</comment>
<comment type="induction">
    <text evidence="4 6">By activin; retinoic acid (RA) inhibits this up-regulation. Expression in neurons is regulated by calcium (Ca2+) activity: the lower the activity, the larger the number of neurons showing expression.</text>
</comment>
<keyword id="KW-0217">Developmental protein</keyword>
<keyword id="KW-0221">Differentiation</keyword>
<keyword id="KW-0238">DNA-binding</keyword>
<keyword id="KW-0371">Homeobox</keyword>
<keyword id="KW-0440">LIM domain</keyword>
<keyword id="KW-0479">Metal-binding</keyword>
<keyword id="KW-0524">Neurogenesis</keyword>
<keyword id="KW-0539">Nucleus</keyword>
<keyword id="KW-1185">Reference proteome</keyword>
<keyword id="KW-0677">Repeat</keyword>
<keyword id="KW-0804">Transcription</keyword>
<keyword id="KW-0805">Transcription regulation</keyword>
<keyword id="KW-0862">Zinc</keyword>
<protein>
    <recommendedName>
        <fullName>LIM homeobox transcription factor 1-beta.1</fullName>
    </recommendedName>
    <alternativeName>
        <fullName evidence="11">LIM homeobox protein 1b</fullName>
        <shortName evidence="7 8 9">Xlmx1b</shortName>
    </alternativeName>
</protein>
<feature type="chain" id="PRO_0000399037" description="LIM homeobox transcription factor 1-beta.1">
    <location>
        <begin position="1"/>
        <end position="400"/>
    </location>
</feature>
<feature type="domain" description="LIM zinc-binding 1" evidence="2">
    <location>
        <begin position="54"/>
        <end position="113"/>
    </location>
</feature>
<feature type="domain" description="LIM zinc-binding 2" evidence="2">
    <location>
        <begin position="114"/>
        <end position="175"/>
    </location>
</feature>
<feature type="DNA-binding region" description="Homeobox" evidence="1">
    <location>
        <begin position="218"/>
        <end position="277"/>
    </location>
</feature>
<feature type="region of interest" description="Disordered" evidence="3">
    <location>
        <begin position="175"/>
        <end position="228"/>
    </location>
</feature>
<gene>
    <name evidence="12" type="primary">lmx1b.1</name>
    <name evidence="11" type="synonym">lmx1b</name>
</gene>
<evidence type="ECO:0000255" key="1">
    <source>
        <dbReference type="PROSITE-ProRule" id="PRU00108"/>
    </source>
</evidence>
<evidence type="ECO:0000255" key="2">
    <source>
        <dbReference type="PROSITE-ProRule" id="PRU00125"/>
    </source>
</evidence>
<evidence type="ECO:0000256" key="3">
    <source>
        <dbReference type="SAM" id="MobiDB-lite"/>
    </source>
</evidence>
<evidence type="ECO:0000269" key="4">
    <source>
    </source>
</evidence>
<evidence type="ECO:0000269" key="5">
    <source>
    </source>
</evidence>
<evidence type="ECO:0000269" key="6">
    <source>
    </source>
</evidence>
<evidence type="ECO:0000303" key="7">
    <source>
    </source>
</evidence>
<evidence type="ECO:0000303" key="8">
    <source>
    </source>
</evidence>
<evidence type="ECO:0000303" key="9">
    <source>
    </source>
</evidence>
<evidence type="ECO:0000305" key="10"/>
<evidence type="ECO:0000312" key="11">
    <source>
        <dbReference type="EMBL" id="AAL32444.1"/>
    </source>
</evidence>
<evidence type="ECO:0000312" key="12">
    <source>
        <dbReference type="Xenbase" id="XB-GENE-494754"/>
    </source>
</evidence>
<accession>Q8UVR3</accession>
<organism>
    <name type="scientific">Xenopus laevis</name>
    <name type="common">African clawed frog</name>
    <dbReference type="NCBI Taxonomy" id="8355"/>
    <lineage>
        <taxon>Eukaryota</taxon>
        <taxon>Metazoa</taxon>
        <taxon>Chordata</taxon>
        <taxon>Craniata</taxon>
        <taxon>Vertebrata</taxon>
        <taxon>Euteleostomi</taxon>
        <taxon>Amphibia</taxon>
        <taxon>Batrachia</taxon>
        <taxon>Anura</taxon>
        <taxon>Pipoidea</taxon>
        <taxon>Pipidae</taxon>
        <taxon>Xenopodinae</taxon>
        <taxon>Xenopus</taxon>
        <taxon>Xenopus</taxon>
    </lineage>
</organism>
<proteinExistence type="evidence at transcript level"/>